<evidence type="ECO:0000250" key="1"/>
<evidence type="ECO:0000255" key="2">
    <source>
        <dbReference type="PROSITE-ProRule" id="PRU00448"/>
    </source>
</evidence>
<evidence type="ECO:0000305" key="3"/>
<feature type="chain" id="PRO_0000342947" description="Probable calcium-binding protein CML17">
    <location>
        <begin position="1"/>
        <end position="166"/>
    </location>
</feature>
<feature type="domain" description="EF-hand 1" evidence="2">
    <location>
        <begin position="12"/>
        <end position="47"/>
    </location>
</feature>
<feature type="domain" description="EF-hand 2" evidence="2">
    <location>
        <begin position="48"/>
        <end position="83"/>
    </location>
</feature>
<feature type="domain" description="EF-hand 3" evidence="2">
    <location>
        <begin position="91"/>
        <end position="126"/>
    </location>
</feature>
<feature type="domain" description="EF-hand 4" evidence="2">
    <location>
        <begin position="127"/>
        <end position="162"/>
    </location>
</feature>
<feature type="binding site" evidence="2">
    <location>
        <position position="25"/>
    </location>
    <ligand>
        <name>Ca(2+)</name>
        <dbReference type="ChEBI" id="CHEBI:29108"/>
        <label>1</label>
    </ligand>
</feature>
<feature type="binding site" evidence="2">
    <location>
        <position position="27"/>
    </location>
    <ligand>
        <name>Ca(2+)</name>
        <dbReference type="ChEBI" id="CHEBI:29108"/>
        <label>1</label>
    </ligand>
</feature>
<feature type="binding site" evidence="2">
    <location>
        <position position="29"/>
    </location>
    <ligand>
        <name>Ca(2+)</name>
        <dbReference type="ChEBI" id="CHEBI:29108"/>
        <label>1</label>
    </ligand>
</feature>
<feature type="binding site" evidence="2">
    <location>
        <position position="31"/>
    </location>
    <ligand>
        <name>Ca(2+)</name>
        <dbReference type="ChEBI" id="CHEBI:29108"/>
        <label>1</label>
    </ligand>
</feature>
<feature type="binding site" evidence="2">
    <location>
        <position position="36"/>
    </location>
    <ligand>
        <name>Ca(2+)</name>
        <dbReference type="ChEBI" id="CHEBI:29108"/>
        <label>1</label>
    </ligand>
</feature>
<feature type="binding site" evidence="2">
    <location>
        <position position="104"/>
    </location>
    <ligand>
        <name>Ca(2+)</name>
        <dbReference type="ChEBI" id="CHEBI:29108"/>
        <label>2</label>
    </ligand>
</feature>
<feature type="binding site" evidence="2">
    <location>
        <position position="106"/>
    </location>
    <ligand>
        <name>Ca(2+)</name>
        <dbReference type="ChEBI" id="CHEBI:29108"/>
        <label>2</label>
    </ligand>
</feature>
<feature type="binding site" evidence="2">
    <location>
        <position position="108"/>
    </location>
    <ligand>
        <name>Ca(2+)</name>
        <dbReference type="ChEBI" id="CHEBI:29108"/>
        <label>2</label>
    </ligand>
</feature>
<feature type="binding site" evidence="2">
    <location>
        <position position="115"/>
    </location>
    <ligand>
        <name>Ca(2+)</name>
        <dbReference type="ChEBI" id="CHEBI:29108"/>
        <label>2</label>
    </ligand>
</feature>
<feature type="binding site" evidence="2">
    <location>
        <position position="140"/>
    </location>
    <ligand>
        <name>Ca(2+)</name>
        <dbReference type="ChEBI" id="CHEBI:29108"/>
        <label>3</label>
    </ligand>
</feature>
<feature type="binding site" evidence="2">
    <location>
        <position position="142"/>
    </location>
    <ligand>
        <name>Ca(2+)</name>
        <dbReference type="ChEBI" id="CHEBI:29108"/>
        <label>3</label>
    </ligand>
</feature>
<feature type="binding site" evidence="2">
    <location>
        <position position="144"/>
    </location>
    <ligand>
        <name>Ca(2+)</name>
        <dbReference type="ChEBI" id="CHEBI:29108"/>
        <label>3</label>
    </ligand>
</feature>
<feature type="binding site" evidence="2">
    <location>
        <position position="146"/>
    </location>
    <ligand>
        <name>Ca(2+)</name>
        <dbReference type="ChEBI" id="CHEBI:29108"/>
        <label>3</label>
    </ligand>
</feature>
<feature type="binding site" evidence="2">
    <location>
        <position position="151"/>
    </location>
    <ligand>
        <name>Ca(2+)</name>
        <dbReference type="ChEBI" id="CHEBI:29108"/>
        <label>3</label>
    </ligand>
</feature>
<keyword id="KW-0106">Calcium</keyword>
<keyword id="KW-0479">Metal-binding</keyword>
<keyword id="KW-1185">Reference proteome</keyword>
<keyword id="KW-0677">Repeat</keyword>
<name>CML17_ARATH</name>
<gene>
    <name type="primary">CML17</name>
    <name type="ordered locus">At1g32250</name>
    <name type="ORF">F27G20.1</name>
    <name type="ORF">F5D14.1</name>
</gene>
<organism>
    <name type="scientific">Arabidopsis thaliana</name>
    <name type="common">Mouse-ear cress</name>
    <dbReference type="NCBI Taxonomy" id="3702"/>
    <lineage>
        <taxon>Eukaryota</taxon>
        <taxon>Viridiplantae</taxon>
        <taxon>Streptophyta</taxon>
        <taxon>Embryophyta</taxon>
        <taxon>Tracheophyta</taxon>
        <taxon>Spermatophyta</taxon>
        <taxon>Magnoliopsida</taxon>
        <taxon>eudicotyledons</taxon>
        <taxon>Gunneridae</taxon>
        <taxon>Pentapetalae</taxon>
        <taxon>rosids</taxon>
        <taxon>malvids</taxon>
        <taxon>Brassicales</taxon>
        <taxon>Brassicaceae</taxon>
        <taxon>Camelineae</taxon>
        <taxon>Arabidopsis</taxon>
    </lineage>
</organism>
<reference key="1">
    <citation type="journal article" date="2000" name="Nature">
        <title>Sequence and analysis of chromosome 1 of the plant Arabidopsis thaliana.</title>
        <authorList>
            <person name="Theologis A."/>
            <person name="Ecker J.R."/>
            <person name="Palm C.J."/>
            <person name="Federspiel N.A."/>
            <person name="Kaul S."/>
            <person name="White O."/>
            <person name="Alonso J."/>
            <person name="Altafi H."/>
            <person name="Araujo R."/>
            <person name="Bowman C.L."/>
            <person name="Brooks S.Y."/>
            <person name="Buehler E."/>
            <person name="Chan A."/>
            <person name="Chao Q."/>
            <person name="Chen H."/>
            <person name="Cheuk R.F."/>
            <person name="Chin C.W."/>
            <person name="Chung M.K."/>
            <person name="Conn L."/>
            <person name="Conway A.B."/>
            <person name="Conway A.R."/>
            <person name="Creasy T.H."/>
            <person name="Dewar K."/>
            <person name="Dunn P."/>
            <person name="Etgu P."/>
            <person name="Feldblyum T.V."/>
            <person name="Feng J.-D."/>
            <person name="Fong B."/>
            <person name="Fujii C.Y."/>
            <person name="Gill J.E."/>
            <person name="Goldsmith A.D."/>
            <person name="Haas B."/>
            <person name="Hansen N.F."/>
            <person name="Hughes B."/>
            <person name="Huizar L."/>
            <person name="Hunter J.L."/>
            <person name="Jenkins J."/>
            <person name="Johnson-Hopson C."/>
            <person name="Khan S."/>
            <person name="Khaykin E."/>
            <person name="Kim C.J."/>
            <person name="Koo H.L."/>
            <person name="Kremenetskaia I."/>
            <person name="Kurtz D.B."/>
            <person name="Kwan A."/>
            <person name="Lam B."/>
            <person name="Langin-Hooper S."/>
            <person name="Lee A."/>
            <person name="Lee J.M."/>
            <person name="Lenz C.A."/>
            <person name="Li J.H."/>
            <person name="Li Y.-P."/>
            <person name="Lin X."/>
            <person name="Liu S.X."/>
            <person name="Liu Z.A."/>
            <person name="Luros J.S."/>
            <person name="Maiti R."/>
            <person name="Marziali A."/>
            <person name="Militscher J."/>
            <person name="Miranda M."/>
            <person name="Nguyen M."/>
            <person name="Nierman W.C."/>
            <person name="Osborne B.I."/>
            <person name="Pai G."/>
            <person name="Peterson J."/>
            <person name="Pham P.K."/>
            <person name="Rizzo M."/>
            <person name="Rooney T."/>
            <person name="Rowley D."/>
            <person name="Sakano H."/>
            <person name="Salzberg S.L."/>
            <person name="Schwartz J.R."/>
            <person name="Shinn P."/>
            <person name="Southwick A.M."/>
            <person name="Sun H."/>
            <person name="Tallon L.J."/>
            <person name="Tambunga G."/>
            <person name="Toriumi M.J."/>
            <person name="Town C.D."/>
            <person name="Utterback T."/>
            <person name="Van Aken S."/>
            <person name="Vaysberg M."/>
            <person name="Vysotskaia V.S."/>
            <person name="Walker M."/>
            <person name="Wu D."/>
            <person name="Yu G."/>
            <person name="Fraser C.M."/>
            <person name="Venter J.C."/>
            <person name="Davis R.W."/>
        </authorList>
    </citation>
    <scope>NUCLEOTIDE SEQUENCE [LARGE SCALE GENOMIC DNA]</scope>
    <source>
        <strain>cv. Columbia</strain>
    </source>
</reference>
<reference key="2">
    <citation type="journal article" date="2017" name="Plant J.">
        <title>Araport11: a complete reannotation of the Arabidopsis thaliana reference genome.</title>
        <authorList>
            <person name="Cheng C.Y."/>
            <person name="Krishnakumar V."/>
            <person name="Chan A.P."/>
            <person name="Thibaud-Nissen F."/>
            <person name="Schobel S."/>
            <person name="Town C.D."/>
        </authorList>
    </citation>
    <scope>GENOME REANNOTATION</scope>
    <source>
        <strain>cv. Columbia</strain>
    </source>
</reference>
<reference key="3">
    <citation type="submission" date="2005-05" db="EMBL/GenBank/DDBJ databases">
        <authorList>
            <person name="Underwood B.A."/>
            <person name="Xiao Y.-L."/>
            <person name="Moskal W.A. Jr."/>
            <person name="Monaghan E.L."/>
            <person name="Wang W."/>
            <person name="Redman J.C."/>
            <person name="Wu H.C."/>
            <person name="Utterback T."/>
            <person name="Town C.D."/>
        </authorList>
    </citation>
    <scope>NUCLEOTIDE SEQUENCE [LARGE SCALE MRNA]</scope>
    <source>
        <strain>cv. Columbia</strain>
    </source>
</reference>
<reference key="4">
    <citation type="journal article" date="2003" name="New Phytol.">
        <title>Calmodulins and related potential calcium sensors of Arabidopsis.</title>
        <authorList>
            <person name="McCormack E."/>
            <person name="Braam J."/>
        </authorList>
    </citation>
    <scope>GENE FAMILY</scope>
    <scope>NOMENCLATURE</scope>
</reference>
<protein>
    <recommendedName>
        <fullName>Probable calcium-binding protein CML17</fullName>
    </recommendedName>
    <alternativeName>
        <fullName>Calmodulin-like protein 17</fullName>
    </alternativeName>
</protein>
<accession>Q9LQN4</accession>
<sequence length="166" mass="18418">MSHKVSKKLDEEQINELREIFRSFDRNKDGSLTQLELGSLLRALGVKPSPDQFETLIDKADTKSNGLVEFPEFVALVSPELLSPAKRTTPYTEEQLLRLFRIFDTDGNGFITAAELAHSMAKLGHALTVAELTGMIKEADSDGDGRINFQEFAKAINSAAFDDIWG</sequence>
<comment type="function">
    <text evidence="1">Potential calcium sensor.</text>
</comment>
<comment type="caution">
    <text evidence="3">Although assigned as a calmodulin family member by Ref.4, it only contains EF-hand domains.</text>
</comment>
<proteinExistence type="evidence at transcript level"/>
<dbReference type="EMBL" id="AC007767">
    <property type="protein sequence ID" value="AAF81321.1"/>
    <property type="molecule type" value="Genomic_DNA"/>
</dbReference>
<dbReference type="EMBL" id="AC084110">
    <property type="protein sequence ID" value="AAG60177.1"/>
    <property type="molecule type" value="Genomic_DNA"/>
</dbReference>
<dbReference type="EMBL" id="CP002684">
    <property type="protein sequence ID" value="AEE31456.1"/>
    <property type="molecule type" value="Genomic_DNA"/>
</dbReference>
<dbReference type="EMBL" id="DQ056474">
    <property type="protein sequence ID" value="AAY78631.1"/>
    <property type="molecule type" value="mRNA"/>
</dbReference>
<dbReference type="PIR" id="A86447">
    <property type="entry name" value="A86447"/>
</dbReference>
<dbReference type="RefSeq" id="NP_174504.1">
    <property type="nucleotide sequence ID" value="NM_102958.2"/>
</dbReference>
<dbReference type="SMR" id="Q9LQN4"/>
<dbReference type="FunCoup" id="Q9LQN4">
    <property type="interactions" value="211"/>
</dbReference>
<dbReference type="STRING" id="3702.Q9LQN4"/>
<dbReference type="PaxDb" id="3702-AT1G32250.1"/>
<dbReference type="ProteomicsDB" id="240992"/>
<dbReference type="EnsemblPlants" id="AT1G32250.1">
    <property type="protein sequence ID" value="AT1G32250.1"/>
    <property type="gene ID" value="AT1G32250"/>
</dbReference>
<dbReference type="GeneID" id="840117"/>
<dbReference type="Gramene" id="AT1G32250.1">
    <property type="protein sequence ID" value="AT1G32250.1"/>
    <property type="gene ID" value="AT1G32250"/>
</dbReference>
<dbReference type="KEGG" id="ath:AT1G32250"/>
<dbReference type="Araport" id="AT1G32250"/>
<dbReference type="TAIR" id="AT1G32250"/>
<dbReference type="eggNOG" id="KOG0027">
    <property type="taxonomic scope" value="Eukaryota"/>
</dbReference>
<dbReference type="HOGENOM" id="CLU_061288_2_2_1"/>
<dbReference type="InParanoid" id="Q9LQN4"/>
<dbReference type="OMA" id="AFDDIWG"/>
<dbReference type="OrthoDB" id="26525at2759"/>
<dbReference type="PhylomeDB" id="Q9LQN4"/>
<dbReference type="PRO" id="PR:Q9LQN4"/>
<dbReference type="Proteomes" id="UP000006548">
    <property type="component" value="Chromosome 1"/>
</dbReference>
<dbReference type="ExpressionAtlas" id="Q9LQN4">
    <property type="expression patterns" value="baseline and differential"/>
</dbReference>
<dbReference type="GO" id="GO:0005509">
    <property type="term" value="F:calcium ion binding"/>
    <property type="evidence" value="ECO:0007669"/>
    <property type="project" value="InterPro"/>
</dbReference>
<dbReference type="CDD" id="cd00051">
    <property type="entry name" value="EFh"/>
    <property type="match status" value="2"/>
</dbReference>
<dbReference type="FunFam" id="1.10.238.10:FF:000313">
    <property type="entry name" value="Probable calcium-binding protein CML16"/>
    <property type="match status" value="1"/>
</dbReference>
<dbReference type="Gene3D" id="1.10.238.10">
    <property type="entry name" value="EF-hand"/>
    <property type="match status" value="1"/>
</dbReference>
<dbReference type="InterPro" id="IPR050230">
    <property type="entry name" value="CALM/Myosin/TropC-like"/>
</dbReference>
<dbReference type="InterPro" id="IPR011992">
    <property type="entry name" value="EF-hand-dom_pair"/>
</dbReference>
<dbReference type="InterPro" id="IPR018247">
    <property type="entry name" value="EF_Hand_1_Ca_BS"/>
</dbReference>
<dbReference type="InterPro" id="IPR002048">
    <property type="entry name" value="EF_hand_dom"/>
</dbReference>
<dbReference type="PANTHER" id="PTHR23048:SF52">
    <property type="entry name" value="CALCIUM-BINDING PROTEIN CML18-RELATED"/>
    <property type="match status" value="1"/>
</dbReference>
<dbReference type="PANTHER" id="PTHR23048">
    <property type="entry name" value="MYOSIN LIGHT CHAIN 1, 3"/>
    <property type="match status" value="1"/>
</dbReference>
<dbReference type="Pfam" id="PF13499">
    <property type="entry name" value="EF-hand_7"/>
    <property type="match status" value="2"/>
</dbReference>
<dbReference type="SMART" id="SM00054">
    <property type="entry name" value="EFh"/>
    <property type="match status" value="4"/>
</dbReference>
<dbReference type="SUPFAM" id="SSF47473">
    <property type="entry name" value="EF-hand"/>
    <property type="match status" value="1"/>
</dbReference>
<dbReference type="PROSITE" id="PS00018">
    <property type="entry name" value="EF_HAND_1"/>
    <property type="match status" value="3"/>
</dbReference>
<dbReference type="PROSITE" id="PS50222">
    <property type="entry name" value="EF_HAND_2"/>
    <property type="match status" value="4"/>
</dbReference>